<protein>
    <recommendedName>
        <fullName evidence="1">2-succinyl-6-hydroxy-2,4-cyclohexadiene-1-carboxylate synthase</fullName>
        <shortName evidence="1">SHCHC synthase</shortName>
        <ecNumber evidence="1">4.2.99.20</ecNumber>
    </recommendedName>
</protein>
<sequence length="252" mass="27713">MMLHAQHMPGQPGAPSLVFLHGFSGDCREWQPVGEQFHGCSRLYIDLPGHGGSAAIPVGRFADVIRLLRATLISYNILKFWLVGYSLGGRVAMMAACQGIPGLCGLVVEGGHPGLQNEQARAERRLSDGRWAERFRREPLTEVFHDWYQQPVFASLTAQQRQALTALRSQNNGETLAAMLEATSLAAQPDLREALNALAFPFYYLCGERDSKFRALAQEVAATCHVIRNAGHNAHRENPAGVVDSLAQILRL</sequence>
<accession>C0Q060</accession>
<reference key="1">
    <citation type="journal article" date="2009" name="PLoS ONE">
        <title>Salmonella paratyphi C: genetic divergence from Salmonella choleraesuis and pathogenic convergence with Salmonella typhi.</title>
        <authorList>
            <person name="Liu W.-Q."/>
            <person name="Feng Y."/>
            <person name="Wang Y."/>
            <person name="Zou Q.-H."/>
            <person name="Chen F."/>
            <person name="Guo J.-T."/>
            <person name="Peng Y.-H."/>
            <person name="Jin Y."/>
            <person name="Li Y.-G."/>
            <person name="Hu S.-N."/>
            <person name="Johnston R.N."/>
            <person name="Liu G.-R."/>
            <person name="Liu S.-L."/>
        </authorList>
    </citation>
    <scope>NUCLEOTIDE SEQUENCE [LARGE SCALE GENOMIC DNA]</scope>
    <source>
        <strain>RKS4594</strain>
    </source>
</reference>
<keyword id="KW-0456">Lyase</keyword>
<keyword id="KW-0474">Menaquinone biosynthesis</keyword>
<evidence type="ECO:0000255" key="1">
    <source>
        <dbReference type="HAMAP-Rule" id="MF_01660"/>
    </source>
</evidence>
<dbReference type="EC" id="4.2.99.20" evidence="1"/>
<dbReference type="EMBL" id="CP000857">
    <property type="protein sequence ID" value="ACN45564.1"/>
    <property type="molecule type" value="Genomic_DNA"/>
</dbReference>
<dbReference type="RefSeq" id="WP_000979141.1">
    <property type="nucleotide sequence ID" value="NC_012125.1"/>
</dbReference>
<dbReference type="SMR" id="C0Q060"/>
<dbReference type="ESTHER" id="salty-YFBB">
    <property type="family name" value="MenH_SHCHC"/>
</dbReference>
<dbReference type="KEGG" id="sei:SPC_1403"/>
<dbReference type="HOGENOM" id="CLU_020336_38_2_6"/>
<dbReference type="UniPathway" id="UPA00079"/>
<dbReference type="UniPathway" id="UPA01057">
    <property type="reaction ID" value="UER00900"/>
</dbReference>
<dbReference type="Proteomes" id="UP000001599">
    <property type="component" value="Chromosome"/>
</dbReference>
<dbReference type="GO" id="GO:0070205">
    <property type="term" value="F:2-succinyl-6-hydroxy-2,4-cyclohexadiene-1-carboxylate synthase activity"/>
    <property type="evidence" value="ECO:0007669"/>
    <property type="project" value="UniProtKB-UniRule"/>
</dbReference>
<dbReference type="GO" id="GO:0009234">
    <property type="term" value="P:menaquinone biosynthetic process"/>
    <property type="evidence" value="ECO:0007669"/>
    <property type="project" value="UniProtKB-UniRule"/>
</dbReference>
<dbReference type="Gene3D" id="3.40.50.1820">
    <property type="entry name" value="alpha/beta hydrolase"/>
    <property type="match status" value="1"/>
</dbReference>
<dbReference type="HAMAP" id="MF_01660">
    <property type="entry name" value="MenH"/>
    <property type="match status" value="1"/>
</dbReference>
<dbReference type="InterPro" id="IPR000073">
    <property type="entry name" value="AB_hydrolase_1"/>
</dbReference>
<dbReference type="InterPro" id="IPR029058">
    <property type="entry name" value="AB_hydrolase_fold"/>
</dbReference>
<dbReference type="InterPro" id="IPR022485">
    <property type="entry name" value="SHCHC_synthase_MenH"/>
</dbReference>
<dbReference type="NCBIfam" id="TIGR03695">
    <property type="entry name" value="menH_SHCHC"/>
    <property type="match status" value="1"/>
</dbReference>
<dbReference type="NCBIfam" id="NF008340">
    <property type="entry name" value="PRK11126.1"/>
    <property type="match status" value="1"/>
</dbReference>
<dbReference type="PANTHER" id="PTHR42916">
    <property type="entry name" value="2-SUCCINYL-5-ENOLPYRUVYL-6-HYDROXY-3-CYCLOHEXENE-1-CARBOXYLATE SYNTHASE"/>
    <property type="match status" value="1"/>
</dbReference>
<dbReference type="PANTHER" id="PTHR42916:SF1">
    <property type="entry name" value="PROTEIN PHYLLO, CHLOROPLASTIC"/>
    <property type="match status" value="1"/>
</dbReference>
<dbReference type="Pfam" id="PF12697">
    <property type="entry name" value="Abhydrolase_6"/>
    <property type="match status" value="1"/>
</dbReference>
<dbReference type="SUPFAM" id="SSF53474">
    <property type="entry name" value="alpha/beta-Hydrolases"/>
    <property type="match status" value="1"/>
</dbReference>
<feature type="chain" id="PRO_1000187120" description="2-succinyl-6-hydroxy-2,4-cyclohexadiene-1-carboxylate synthase">
    <location>
        <begin position="1"/>
        <end position="252"/>
    </location>
</feature>
<comment type="function">
    <text evidence="1">Catalyzes a proton abstraction reaction that results in 2,5-elimination of pyruvate from 2-succinyl-5-enolpyruvyl-6-hydroxy-3-cyclohexene-1-carboxylate (SEPHCHC) and the formation of 2-succinyl-6-hydroxy-2,4-cyclohexadiene-1-carboxylate (SHCHC).</text>
</comment>
<comment type="catalytic activity">
    <reaction evidence="1">
        <text>5-enolpyruvoyl-6-hydroxy-2-succinyl-cyclohex-3-ene-1-carboxylate = (1R,6R)-6-hydroxy-2-succinyl-cyclohexa-2,4-diene-1-carboxylate + pyruvate</text>
        <dbReference type="Rhea" id="RHEA:25597"/>
        <dbReference type="ChEBI" id="CHEBI:15361"/>
        <dbReference type="ChEBI" id="CHEBI:58689"/>
        <dbReference type="ChEBI" id="CHEBI:58818"/>
        <dbReference type="EC" id="4.2.99.20"/>
    </reaction>
</comment>
<comment type="pathway">
    <text evidence="1">Quinol/quinone metabolism; 1,4-dihydroxy-2-naphthoate biosynthesis; 1,4-dihydroxy-2-naphthoate from chorismate: step 3/7.</text>
</comment>
<comment type="pathway">
    <text evidence="1">Quinol/quinone metabolism; menaquinone biosynthesis.</text>
</comment>
<comment type="subunit">
    <text evidence="1">Monomer.</text>
</comment>
<comment type="similarity">
    <text evidence="1">Belongs to the AB hydrolase superfamily. MenH family.</text>
</comment>
<gene>
    <name evidence="1" type="primary">menH</name>
    <name type="ordered locus">SPC_1403</name>
</gene>
<proteinExistence type="inferred from homology"/>
<organism>
    <name type="scientific">Salmonella paratyphi C (strain RKS4594)</name>
    <dbReference type="NCBI Taxonomy" id="476213"/>
    <lineage>
        <taxon>Bacteria</taxon>
        <taxon>Pseudomonadati</taxon>
        <taxon>Pseudomonadota</taxon>
        <taxon>Gammaproteobacteria</taxon>
        <taxon>Enterobacterales</taxon>
        <taxon>Enterobacteriaceae</taxon>
        <taxon>Salmonella</taxon>
    </lineage>
</organism>
<name>MENH_SALPC</name>